<accession>B7L505</accession>
<protein>
    <recommendedName>
        <fullName evidence="2">2-hydroxy-6-oxononadienedioate/2-hydroxy-6-oxononatrienedioate hydrolase</fullName>
        <ecNumber evidence="2">3.7.1.14</ecNumber>
    </recommendedName>
    <alternativeName>
        <fullName evidence="2">2-hydroxy-6-ketonona-2,4-diene-1,9-dioic acid 5,6-hydrolase</fullName>
    </alternativeName>
    <alternativeName>
        <fullName evidence="2">2-hydroxy-6-oxonona-2,4,7-triene-1,9-dioic acid 5,6-hydrolase</fullName>
    </alternativeName>
    <alternativeName>
        <fullName evidence="2">2-hydroxy-6-oxonona-2,4-diene-1,9-dioic acid 5,6-hydrolase</fullName>
    </alternativeName>
</protein>
<keyword id="KW-0058">Aromatic hydrocarbons catabolism</keyword>
<keyword id="KW-0378">Hydrolase</keyword>
<keyword id="KW-1185">Reference proteome</keyword>
<dbReference type="EC" id="3.7.1.14" evidence="2"/>
<dbReference type="EMBL" id="CU928145">
    <property type="protein sequence ID" value="CAU96233.1"/>
    <property type="status" value="ALT_INIT"/>
    <property type="molecule type" value="Genomic_DNA"/>
</dbReference>
<dbReference type="RefSeq" id="WP_000121898.1">
    <property type="nucleotide sequence ID" value="NZ_CP028304.1"/>
</dbReference>
<dbReference type="SMR" id="B7L505"/>
<dbReference type="ESTHER" id="ecoli-mhpc">
    <property type="family name" value="Carbon-carbon_bond_hydrolase"/>
</dbReference>
<dbReference type="MEROPS" id="S33.995"/>
<dbReference type="GeneID" id="93777106"/>
<dbReference type="KEGG" id="eck:EC55989_0356"/>
<dbReference type="HOGENOM" id="CLU_020336_13_2_6"/>
<dbReference type="UniPathway" id="UPA00714"/>
<dbReference type="Proteomes" id="UP000000746">
    <property type="component" value="Chromosome"/>
</dbReference>
<dbReference type="GO" id="GO:0005737">
    <property type="term" value="C:cytoplasm"/>
    <property type="evidence" value="ECO:0007669"/>
    <property type="project" value="InterPro"/>
</dbReference>
<dbReference type="GO" id="GO:0052823">
    <property type="term" value="F:2-hydroxy-6-oxonona-2,4,7-trienedioate hydrolase activity"/>
    <property type="evidence" value="ECO:0007669"/>
    <property type="project" value="RHEA"/>
</dbReference>
<dbReference type="GO" id="GO:0018771">
    <property type="term" value="F:2-hydroxy-6-oxonona-2,4-dienedioate hydrolase activity"/>
    <property type="evidence" value="ECO:0007669"/>
    <property type="project" value="UniProtKB-UniRule"/>
</dbReference>
<dbReference type="GO" id="GO:0042803">
    <property type="term" value="F:protein homodimerization activity"/>
    <property type="evidence" value="ECO:0007669"/>
    <property type="project" value="InterPro"/>
</dbReference>
<dbReference type="GO" id="GO:0019380">
    <property type="term" value="P:3-phenylpropionate catabolic process"/>
    <property type="evidence" value="ECO:0007669"/>
    <property type="project" value="UniProtKB-UniRule"/>
</dbReference>
<dbReference type="FunFam" id="3.40.50.1820:FF:000085">
    <property type="entry name" value="2-hydroxy-6-oxononadienedioate/2-hydroxy-6-oxononatrienedioate hydrolase"/>
    <property type="match status" value="1"/>
</dbReference>
<dbReference type="Gene3D" id="3.40.50.1820">
    <property type="entry name" value="alpha/beta hydrolase"/>
    <property type="match status" value="1"/>
</dbReference>
<dbReference type="HAMAP" id="MF_01654">
    <property type="entry name" value="MhpC"/>
    <property type="match status" value="1"/>
</dbReference>
<dbReference type="InterPro" id="IPR000073">
    <property type="entry name" value="AB_hydrolase_1"/>
</dbReference>
<dbReference type="InterPro" id="IPR029058">
    <property type="entry name" value="AB_hydrolase_fold"/>
</dbReference>
<dbReference type="InterPro" id="IPR000639">
    <property type="entry name" value="Epox_hydrolase-like"/>
</dbReference>
<dbReference type="InterPro" id="IPR023791">
    <property type="entry name" value="MhpC_alpha/beta_hydrolase"/>
</dbReference>
<dbReference type="PANTHER" id="PTHR43689:SF8">
    <property type="entry name" value="ALPHA_BETA-HYDROLASES SUPERFAMILY PROTEIN"/>
    <property type="match status" value="1"/>
</dbReference>
<dbReference type="PANTHER" id="PTHR43689">
    <property type="entry name" value="HYDROLASE"/>
    <property type="match status" value="1"/>
</dbReference>
<dbReference type="Pfam" id="PF00561">
    <property type="entry name" value="Abhydrolase_1"/>
    <property type="match status" value="1"/>
</dbReference>
<dbReference type="PRINTS" id="PR00111">
    <property type="entry name" value="ABHYDROLASE"/>
</dbReference>
<dbReference type="PRINTS" id="PR00412">
    <property type="entry name" value="EPOXHYDRLASE"/>
</dbReference>
<dbReference type="SUPFAM" id="SSF53474">
    <property type="entry name" value="alpha/beta-Hydrolases"/>
    <property type="match status" value="1"/>
</dbReference>
<organism>
    <name type="scientific">Escherichia coli (strain 55989 / EAEC)</name>
    <dbReference type="NCBI Taxonomy" id="585055"/>
    <lineage>
        <taxon>Bacteria</taxon>
        <taxon>Pseudomonadati</taxon>
        <taxon>Pseudomonadota</taxon>
        <taxon>Gammaproteobacteria</taxon>
        <taxon>Enterobacterales</taxon>
        <taxon>Enterobacteriaceae</taxon>
        <taxon>Escherichia</taxon>
    </lineage>
</organism>
<evidence type="ECO:0000255" key="1"/>
<evidence type="ECO:0000255" key="2">
    <source>
        <dbReference type="HAMAP-Rule" id="MF_01654"/>
    </source>
</evidence>
<evidence type="ECO:0000305" key="3"/>
<feature type="chain" id="PRO_1000187012" description="2-hydroxy-6-oxononadienedioate/2-hydroxy-6-oxononatrienedioate hydrolase">
    <location>
        <begin position="1"/>
        <end position="288"/>
    </location>
</feature>
<feature type="domain" description="AB hydrolase-1" evidence="1">
    <location>
        <begin position="38"/>
        <end position="273"/>
    </location>
</feature>
<feature type="active site" description="Proton acceptor" evidence="2">
    <location>
        <position position="267"/>
    </location>
</feature>
<feature type="site" description="Transition state stabilizer" evidence="2">
    <location>
        <position position="114"/>
    </location>
</feature>
<feature type="site" description="Catalytic role in ketonization of the dienol substrate (substrate destabilization)" evidence="2">
    <location>
        <position position="192"/>
    </location>
</feature>
<sequence>MSYQPQTEAATSRFLNVEEAGKTLRIHFNDCGQGDETVVLLHGSGPGATGWANFSRNIDPLVEAGYRVILLDCPGWGKSDSIVNSGSRSDLNARILKSVVDQLDIAKIHLLGNSMGGHSSVAFTLNWPERVGKLVLMGGGTGGMSLFTPMPTEGIKRLNQLYRQPTIENLKLMMDIFVFDTSDLTDALFEARLNNMLSRRDHLENFVKSLEANPKQFPDFGPRLAEIKAQTLIVWGRNDRFVPMDAGLRLLSGIAGSELHIFRDCGHWAQWEHADAFNQLVLNFLARP</sequence>
<proteinExistence type="inferred from homology"/>
<gene>
    <name evidence="2" type="primary">mhpC</name>
    <name type="ordered locus">EC55989_0356</name>
</gene>
<name>MHPC_ECO55</name>
<reference key="1">
    <citation type="journal article" date="2009" name="PLoS Genet.">
        <title>Organised genome dynamics in the Escherichia coli species results in highly diverse adaptive paths.</title>
        <authorList>
            <person name="Touchon M."/>
            <person name="Hoede C."/>
            <person name="Tenaillon O."/>
            <person name="Barbe V."/>
            <person name="Baeriswyl S."/>
            <person name="Bidet P."/>
            <person name="Bingen E."/>
            <person name="Bonacorsi S."/>
            <person name="Bouchier C."/>
            <person name="Bouvet O."/>
            <person name="Calteau A."/>
            <person name="Chiapello H."/>
            <person name="Clermont O."/>
            <person name="Cruveiller S."/>
            <person name="Danchin A."/>
            <person name="Diard M."/>
            <person name="Dossat C."/>
            <person name="Karoui M.E."/>
            <person name="Frapy E."/>
            <person name="Garry L."/>
            <person name="Ghigo J.M."/>
            <person name="Gilles A.M."/>
            <person name="Johnson J."/>
            <person name="Le Bouguenec C."/>
            <person name="Lescat M."/>
            <person name="Mangenot S."/>
            <person name="Martinez-Jehanne V."/>
            <person name="Matic I."/>
            <person name="Nassif X."/>
            <person name="Oztas S."/>
            <person name="Petit M.A."/>
            <person name="Pichon C."/>
            <person name="Rouy Z."/>
            <person name="Ruf C.S."/>
            <person name="Schneider D."/>
            <person name="Tourret J."/>
            <person name="Vacherie B."/>
            <person name="Vallenet D."/>
            <person name="Medigue C."/>
            <person name="Rocha E.P.C."/>
            <person name="Denamur E."/>
        </authorList>
    </citation>
    <scope>NUCLEOTIDE SEQUENCE [LARGE SCALE GENOMIC DNA]</scope>
    <source>
        <strain>55989 / EAEC</strain>
    </source>
</reference>
<comment type="function">
    <text evidence="2">Catalyzes the cleavage of the C5-C6 bond of 2-hydroxy-6-oxononadienedioate and 2-hydroxy-6-oxononatrienedioate, a dienol ring fission product of the bacterial meta-cleavage pathway for degradation of phenylpropionic acid.</text>
</comment>
<comment type="catalytic activity">
    <reaction evidence="2">
        <text>(2Z,4E)-2-hydroxy-6-oxonona-2,4-dienedioate + H2O = (2Z)-2-hydroxypenta-2,4-dienoate + succinate + H(+)</text>
        <dbReference type="Rhea" id="RHEA:34187"/>
        <dbReference type="ChEBI" id="CHEBI:15377"/>
        <dbReference type="ChEBI" id="CHEBI:15378"/>
        <dbReference type="ChEBI" id="CHEBI:30031"/>
        <dbReference type="ChEBI" id="CHEBI:66887"/>
        <dbReference type="ChEBI" id="CHEBI:67152"/>
        <dbReference type="EC" id="3.7.1.14"/>
    </reaction>
</comment>
<comment type="catalytic activity">
    <reaction evidence="2">
        <text>(2Z,4E,7E)-2-hydroxy-6-oxonona-2,4,7-trienedioate + H2O = (2Z)-2-hydroxypenta-2,4-dienoate + fumarate + H(+)</text>
        <dbReference type="Rhea" id="RHEA:34191"/>
        <dbReference type="ChEBI" id="CHEBI:15377"/>
        <dbReference type="ChEBI" id="CHEBI:15378"/>
        <dbReference type="ChEBI" id="CHEBI:29806"/>
        <dbReference type="ChEBI" id="CHEBI:66888"/>
        <dbReference type="ChEBI" id="CHEBI:67152"/>
        <dbReference type="EC" id="3.7.1.14"/>
    </reaction>
</comment>
<comment type="pathway">
    <text evidence="2">Aromatic compound metabolism; 3-phenylpropanoate degradation.</text>
</comment>
<comment type="subunit">
    <text evidence="2">Homodimer.</text>
</comment>
<comment type="similarity">
    <text evidence="2">Belongs to the AB hydrolase superfamily. MhpC family.</text>
</comment>
<comment type="sequence caution" evidence="3">
    <conflict type="erroneous initiation">
        <sequence resource="EMBL-CDS" id="CAU96233"/>
    </conflict>
    <text>Extended N-terminus.</text>
</comment>